<reference key="1">
    <citation type="journal article" date="2012" name="Nature">
        <title>The bonobo genome compared with the chimpanzee and human genomes.</title>
        <authorList>
            <person name="Prufer K."/>
            <person name="Munch K."/>
            <person name="Hellmann I."/>
            <person name="Akagi K."/>
            <person name="Miller J.R."/>
            <person name="Walenz B."/>
            <person name="Koren S."/>
            <person name="Sutton G."/>
            <person name="Kodira C."/>
            <person name="Winer R."/>
            <person name="Knight J.R."/>
            <person name="Mullikin J.C."/>
            <person name="Meader S.J."/>
            <person name="Ponting C.P."/>
            <person name="Lunter G."/>
            <person name="Higashino S."/>
            <person name="Hobolth A."/>
            <person name="Dutheil J."/>
            <person name="Karakoc E."/>
            <person name="Alkan C."/>
            <person name="Sajjadian S."/>
            <person name="Catacchio C.R."/>
            <person name="Ventura M."/>
            <person name="Marques-Bonet T."/>
            <person name="Eichler E.E."/>
            <person name="Andre C."/>
            <person name="Atencia R."/>
            <person name="Mugisha L."/>
            <person name="Junhold J."/>
            <person name="Patterson N."/>
            <person name="Siebauer M."/>
            <person name="Good J.M."/>
            <person name="Fischer A."/>
            <person name="Ptak S.E."/>
            <person name="Lachmann M."/>
            <person name="Symer D.E."/>
            <person name="Mailund T."/>
            <person name="Schierup M.H."/>
            <person name="Andres A.M."/>
            <person name="Kelso J."/>
            <person name="Paabo S."/>
        </authorList>
    </citation>
    <scope>NUCLEOTIDE SEQUENCE [LARGE SCALE GENOMIC DNA]</scope>
</reference>
<reference key="2">
    <citation type="journal article" date="2010" name="Comp. Biochem. Physiol.">
        <title>Detection of two distinct forms of apoC-I in great apes.</title>
        <authorList>
            <person name="Puppione D.L."/>
            <person name="Ryan C.M."/>
            <person name="Bassilian S."/>
            <person name="Souda P."/>
            <person name="Xiao X."/>
            <person name="Ryder O.A."/>
            <person name="Whitelegge J.P."/>
        </authorList>
    </citation>
    <scope>PROTEIN SEQUENCE OF 29-83</scope>
    <scope>MASS SPECTROMETRY</scope>
</reference>
<reference key="3">
    <citation type="unpublished observations" date="2013-11">
        <authorList>
            <person name="Puppione D.L."/>
        </authorList>
    </citation>
    <scope>IDENTIFICATION</scope>
</reference>
<reference key="4">
    <citation type="journal article" date="2013" name="Front. Biol.">
        <title>Proteogenomic Review of the Changes in Primate apoC-I during Evolution.</title>
        <authorList>
            <person name="Puppione D."/>
            <person name="Whitelegge J.P."/>
        </authorList>
    </citation>
    <scope>REVIEW</scope>
</reference>
<reference key="5">
    <citation type="journal article" date="2014" name="Comp. Biochem. Physiol.">
        <title>Higher primates, but not New World monkeys, have a duplicate set of enhancers flanking their apoC-I genes.</title>
        <authorList>
            <person name="Puppione D.L."/>
        </authorList>
    </citation>
    <scope>GENE DUPLICATION</scope>
</reference>
<name>APO1A_PANPA</name>
<protein>
    <recommendedName>
        <fullName evidence="4">Apolipoprotein C-I, acidic form</fullName>
        <shortName>Apo-CIA</shortName>
        <shortName>ApoC-IA</shortName>
    </recommendedName>
    <alternativeName>
        <fullName>Apolipoprotein C1A</fullName>
    </alternativeName>
    <component>
        <recommendedName>
            <fullName>Truncated apolipoprotein C-I, acidic form</fullName>
            <shortName>Apo-CIA'</shortName>
            <shortName>ApoC-IA'</shortName>
        </recommendedName>
    </component>
</protein>
<keyword id="KW-0903">Direct protein sequencing</keyword>
<keyword id="KW-0445">Lipid transport</keyword>
<keyword id="KW-1185">Reference proteome</keyword>
<keyword id="KW-0964">Secreted</keyword>
<keyword id="KW-0732">Signal</keyword>
<keyword id="KW-0813">Transport</keyword>
<comment type="subcellular location">
    <subcellularLocation>
        <location evidence="1">Secreted</location>
    </subcellularLocation>
</comment>
<comment type="mass spectrometry" mass="6548.0" method="Electrospray" evidence="3">
    <molecule>Truncated apolipoprotein C-I, acidic form</molecule>
</comment>
<comment type="miscellaneous">
    <text evidence="5">Apolipoprotein C-I is present in acidic (APOC1A) and basic (APOC1B) forms in P.paniscus, P.abelii and P.troglodytes and perhaps also in baboons and macaques. The two genes for ApoC-I arose through a duplication process that occurred after the divergence of New World monkeys from the human lineage. In human, the acidic form has become a pseudogene sometime between the divergence of bonobos and chimpanzees from the human lineage and the appearance of the Denisovans. Pseudogenization resulted when the codon for the penultimate amino acid in the signal sequence was changed to a stop codon.</text>
</comment>
<comment type="similarity">
    <text evidence="2">Belongs to the apolipoprotein C1 family.</text>
</comment>
<proteinExistence type="evidence at protein level"/>
<accession>P86336</accession>
<dbReference type="EMBL" id="AJFE01059483">
    <property type="status" value="NOT_ANNOTATED_CDS"/>
    <property type="molecule type" value="Genomic_DNA"/>
</dbReference>
<dbReference type="SMR" id="P86336"/>
<dbReference type="STRING" id="9597.ENSPPAP00000027268"/>
<dbReference type="eggNOG" id="ENOG502SEU4">
    <property type="taxonomic scope" value="Eukaryota"/>
</dbReference>
<dbReference type="Proteomes" id="UP000240080">
    <property type="component" value="Unplaced"/>
</dbReference>
<dbReference type="GO" id="GO:0034364">
    <property type="term" value="C:high-density lipoprotein particle"/>
    <property type="evidence" value="ECO:0007669"/>
    <property type="project" value="TreeGrafter"/>
</dbReference>
<dbReference type="GO" id="GO:0034361">
    <property type="term" value="C:very-low-density lipoprotein particle"/>
    <property type="evidence" value="ECO:0007669"/>
    <property type="project" value="TreeGrafter"/>
</dbReference>
<dbReference type="GO" id="GO:0005504">
    <property type="term" value="F:fatty acid binding"/>
    <property type="evidence" value="ECO:0007669"/>
    <property type="project" value="TreeGrafter"/>
</dbReference>
<dbReference type="GO" id="GO:0004859">
    <property type="term" value="F:phospholipase inhibitor activity"/>
    <property type="evidence" value="ECO:0007669"/>
    <property type="project" value="TreeGrafter"/>
</dbReference>
<dbReference type="GO" id="GO:0006869">
    <property type="term" value="P:lipid transport"/>
    <property type="evidence" value="ECO:0007669"/>
    <property type="project" value="UniProtKB-KW"/>
</dbReference>
<dbReference type="GO" id="GO:0042157">
    <property type="term" value="P:lipoprotein metabolic process"/>
    <property type="evidence" value="ECO:0007669"/>
    <property type="project" value="InterPro"/>
</dbReference>
<dbReference type="GO" id="GO:0032375">
    <property type="term" value="P:negative regulation of cholesterol transport"/>
    <property type="evidence" value="ECO:0007669"/>
    <property type="project" value="TreeGrafter"/>
</dbReference>
<dbReference type="GO" id="GO:0050995">
    <property type="term" value="P:negative regulation of lipid catabolic process"/>
    <property type="evidence" value="ECO:0007669"/>
    <property type="project" value="TreeGrafter"/>
</dbReference>
<dbReference type="GO" id="GO:0010916">
    <property type="term" value="P:negative regulation of very-low-density lipoprotein particle clearance"/>
    <property type="evidence" value="ECO:0007669"/>
    <property type="project" value="TreeGrafter"/>
</dbReference>
<dbReference type="GO" id="GO:0006641">
    <property type="term" value="P:triglyceride metabolic process"/>
    <property type="evidence" value="ECO:0007669"/>
    <property type="project" value="TreeGrafter"/>
</dbReference>
<dbReference type="GO" id="GO:0034447">
    <property type="term" value="P:very-low-density lipoprotein particle clearance"/>
    <property type="evidence" value="ECO:0007669"/>
    <property type="project" value="TreeGrafter"/>
</dbReference>
<dbReference type="Gene3D" id="4.10.260.30">
    <property type="entry name" value="Apolipoprotein C-I"/>
    <property type="match status" value="1"/>
</dbReference>
<dbReference type="InterPro" id="IPR043081">
    <property type="entry name" value="ApoC-1_sf"/>
</dbReference>
<dbReference type="InterPro" id="IPR006781">
    <property type="entry name" value="ApoC-I"/>
</dbReference>
<dbReference type="PANTHER" id="PTHR16565">
    <property type="entry name" value="APOLIPOPROTEIN C-I"/>
    <property type="match status" value="1"/>
</dbReference>
<dbReference type="PANTHER" id="PTHR16565:SF3">
    <property type="entry name" value="APOLIPOPROTEIN C-I, ACIDIC FORM"/>
    <property type="match status" value="1"/>
</dbReference>
<dbReference type="Pfam" id="PF04691">
    <property type="entry name" value="ApoC-I"/>
    <property type="match status" value="1"/>
</dbReference>
<organism>
    <name type="scientific">Pan paniscus</name>
    <name type="common">Pygmy chimpanzee</name>
    <name type="synonym">Bonobo</name>
    <dbReference type="NCBI Taxonomy" id="9597"/>
    <lineage>
        <taxon>Eukaryota</taxon>
        <taxon>Metazoa</taxon>
        <taxon>Chordata</taxon>
        <taxon>Craniata</taxon>
        <taxon>Vertebrata</taxon>
        <taxon>Euteleostomi</taxon>
        <taxon>Mammalia</taxon>
        <taxon>Eutheria</taxon>
        <taxon>Euarchontoglires</taxon>
        <taxon>Primates</taxon>
        <taxon>Haplorrhini</taxon>
        <taxon>Catarrhini</taxon>
        <taxon>Hominidae</taxon>
        <taxon>Pan</taxon>
    </lineage>
</organism>
<feature type="signal peptide" evidence="2">
    <location>
        <begin position="1"/>
        <end position="26"/>
    </location>
</feature>
<feature type="chain" id="PRO_0000424960" description="Apolipoprotein C-I, acidic form">
    <location>
        <begin position="27"/>
        <end position="83"/>
    </location>
</feature>
<feature type="chain" id="PRO_0000383668" description="Truncated apolipoprotein C-I, acidic form" evidence="3">
    <location>
        <begin position="29"/>
        <end position="83"/>
    </location>
</feature>
<gene>
    <name type="primary">APOC1A</name>
    <name type="synonym">APOC1A'</name>
</gene>
<sequence length="83" mass="9417">MRLFLSLPVLVVVLSIVLEGPAPAQGAPEVSNPFDGLEELGKTLEDNTREFINRITQSELPAKMWDWFSETFRKVKEKLKIDS</sequence>
<evidence type="ECO:0000250" key="1">
    <source>
        <dbReference type="UniProtKB" id="P02654"/>
    </source>
</evidence>
<evidence type="ECO:0000255" key="2"/>
<evidence type="ECO:0000269" key="3">
    <source>
    </source>
</evidence>
<evidence type="ECO:0000303" key="4">
    <source>
    </source>
</evidence>
<evidence type="ECO:0000303" key="5">
    <source>
    </source>
</evidence>